<gene>
    <name evidence="5" type="primary">SOK1</name>
    <name evidence="7" type="ORF">PHYPA_018923</name>
</gene>
<protein>
    <recommendedName>
        <fullName evidence="5">Protein SOSEKI 1</fullName>
        <shortName evidence="5">PpSOK1</shortName>
    </recommendedName>
</protein>
<name>SOK1_PHYPA</name>
<reference key="1">
    <citation type="journal article" date="2008" name="Science">
        <title>The Physcomitrella genome reveals evolutionary insights into the conquest of land by plants.</title>
        <authorList>
            <person name="Rensing S.A."/>
            <person name="Lang D."/>
            <person name="Zimmer A.D."/>
            <person name="Terry A."/>
            <person name="Salamov A."/>
            <person name="Shapiro H."/>
            <person name="Nishiyama T."/>
            <person name="Perroud P.-F."/>
            <person name="Lindquist E.A."/>
            <person name="Kamisugi Y."/>
            <person name="Tanahashi T."/>
            <person name="Sakakibara K."/>
            <person name="Fujita T."/>
            <person name="Oishi K."/>
            <person name="Shin-I T."/>
            <person name="Kuroki Y."/>
            <person name="Toyoda A."/>
            <person name="Suzuki Y."/>
            <person name="Hashimoto S.-I."/>
            <person name="Yamaguchi K."/>
            <person name="Sugano S."/>
            <person name="Kohara Y."/>
            <person name="Fujiyama A."/>
            <person name="Anterola A."/>
            <person name="Aoki S."/>
            <person name="Ashton N."/>
            <person name="Barbazuk W.B."/>
            <person name="Barker E."/>
            <person name="Bennetzen J.L."/>
            <person name="Blankenship R."/>
            <person name="Cho S.H."/>
            <person name="Dutcher S.K."/>
            <person name="Estelle M."/>
            <person name="Fawcett J.A."/>
            <person name="Gundlach H."/>
            <person name="Hanada K."/>
            <person name="Heyl A."/>
            <person name="Hicks K.A."/>
            <person name="Hughes J."/>
            <person name="Lohr M."/>
            <person name="Mayer K."/>
            <person name="Melkozernov A."/>
            <person name="Murata T."/>
            <person name="Nelson D.R."/>
            <person name="Pils B."/>
            <person name="Prigge M."/>
            <person name="Reiss B."/>
            <person name="Renner T."/>
            <person name="Rombauts S."/>
            <person name="Rushton P.J."/>
            <person name="Sanderfoot A."/>
            <person name="Schween G."/>
            <person name="Shiu S.-H."/>
            <person name="Stueber K."/>
            <person name="Theodoulou F.L."/>
            <person name="Tu H."/>
            <person name="Van de Peer Y."/>
            <person name="Verrier P.J."/>
            <person name="Waters E."/>
            <person name="Wood A."/>
            <person name="Yang L."/>
            <person name="Cove D."/>
            <person name="Cuming A.C."/>
            <person name="Hasebe M."/>
            <person name="Lucas S."/>
            <person name="Mishler B.D."/>
            <person name="Reski R."/>
            <person name="Grigoriev I.V."/>
            <person name="Quatrano R.S."/>
            <person name="Boore J.L."/>
        </authorList>
    </citation>
    <scope>NUCLEOTIDE SEQUENCE [LARGE SCALE GENOMIC DNA]</scope>
    <source>
        <strain>cv. Gransden 2004</strain>
    </source>
</reference>
<reference key="2">
    <citation type="journal article" date="2018" name="Plant J.">
        <title>The Physcomitrella patens chromosome-scale assembly reveals moss genome structure and evolution.</title>
        <authorList>
            <person name="Lang D."/>
            <person name="Ullrich K.K."/>
            <person name="Murat F."/>
            <person name="Fuchs J."/>
            <person name="Jenkins J."/>
            <person name="Haas F.B."/>
            <person name="Piednoel M."/>
            <person name="Gundlach H."/>
            <person name="Van Bel M."/>
            <person name="Meyberg R."/>
            <person name="Vives C."/>
            <person name="Morata J."/>
            <person name="Symeonidi A."/>
            <person name="Hiss M."/>
            <person name="Muchero W."/>
            <person name="Kamisugi Y."/>
            <person name="Saleh O."/>
            <person name="Blanc G."/>
            <person name="Decker E.L."/>
            <person name="van Gessel N."/>
            <person name="Grimwood J."/>
            <person name="Hayes R.D."/>
            <person name="Graham S.W."/>
            <person name="Gunter L.E."/>
            <person name="McDaniel S.F."/>
            <person name="Hoernstein S.N.W."/>
            <person name="Larsson A."/>
            <person name="Li F.W."/>
            <person name="Perroud P.F."/>
            <person name="Phillips J."/>
            <person name="Ranjan P."/>
            <person name="Rokshar D.S."/>
            <person name="Rothfels C.J."/>
            <person name="Schneider L."/>
            <person name="Shu S."/>
            <person name="Stevenson D.W."/>
            <person name="Thummler F."/>
            <person name="Tillich M."/>
            <person name="Villarreal Aguilar J.C."/>
            <person name="Widiez T."/>
            <person name="Wong G.K."/>
            <person name="Wymore A."/>
            <person name="Zhang Y."/>
            <person name="Zimmer A.D."/>
            <person name="Quatrano R.S."/>
            <person name="Mayer K.F.X."/>
            <person name="Goodstein D."/>
            <person name="Casacuberta J.M."/>
            <person name="Vandepoele K."/>
            <person name="Reski R."/>
            <person name="Cuming A.C."/>
            <person name="Tuskan G.A."/>
            <person name="Maumus F."/>
            <person name="Salse J."/>
            <person name="Schmutz J."/>
            <person name="Rensing S.A."/>
        </authorList>
    </citation>
    <scope>GENOME REANNOTATION</scope>
    <source>
        <strain>cv. Gransden 2004</strain>
    </source>
</reference>
<reference key="3">
    <citation type="journal article" date="2020" name="Cell">
        <title>DIX domain polymerization drives assembly of plant cell polarity complexes.</title>
        <authorList>
            <person name="van Dop M."/>
            <person name="Fiedler M."/>
            <person name="Mutte S."/>
            <person name="de Keijzer J."/>
            <person name="Olijslager L."/>
            <person name="Albrecht C."/>
            <person name="Liao C.Y."/>
            <person name="Janson M.E."/>
            <person name="Bienz M."/>
            <person name="Weijers D."/>
        </authorList>
    </citation>
    <scope>SUBUNIT</scope>
    <scope>GENE FAMILY</scope>
</reference>
<dbReference type="EMBL" id="ABEU02000014">
    <property type="protein sequence ID" value="PNR41520.1"/>
    <property type="molecule type" value="Genomic_DNA"/>
</dbReference>
<dbReference type="SMR" id="A0A2K1JJ00"/>
<dbReference type="PaxDb" id="3218-PP1S69_3V6.1"/>
<dbReference type="EnsemblPlants" id="Pp3c14_23220V3.1">
    <property type="protein sequence ID" value="Pp3c14_23220V3.1"/>
    <property type="gene ID" value="Pp3c14_23220"/>
</dbReference>
<dbReference type="EnsemblPlants" id="Pp3c14_23220V3.2">
    <property type="protein sequence ID" value="Pp3c14_23220V3.2"/>
    <property type="gene ID" value="Pp3c14_23220"/>
</dbReference>
<dbReference type="Gramene" id="Pp3c14_23220V3.1">
    <property type="protein sequence ID" value="Pp3c14_23220V3.1"/>
    <property type="gene ID" value="Pp3c14_23220"/>
</dbReference>
<dbReference type="Gramene" id="Pp3c14_23220V3.2">
    <property type="protein sequence ID" value="Pp3c14_23220V3.2"/>
    <property type="gene ID" value="Pp3c14_23220"/>
</dbReference>
<dbReference type="InParanoid" id="A0A2K1JJ00"/>
<dbReference type="OrthoDB" id="1280899at2759"/>
<dbReference type="Proteomes" id="UP000006727">
    <property type="component" value="Chromosome 14"/>
</dbReference>
<dbReference type="GO" id="GO:0005886">
    <property type="term" value="C:plasma membrane"/>
    <property type="evidence" value="ECO:0007669"/>
    <property type="project" value="UniProtKB-SubCell"/>
</dbReference>
<dbReference type="GO" id="GO:0042803">
    <property type="term" value="F:protein homodimerization activity"/>
    <property type="evidence" value="ECO:0000250"/>
    <property type="project" value="UniProtKB"/>
</dbReference>
<dbReference type="GO" id="GO:0008270">
    <property type="term" value="F:zinc ion binding"/>
    <property type="evidence" value="ECO:0007669"/>
    <property type="project" value="UniProtKB-KW"/>
</dbReference>
<dbReference type="GO" id="GO:0051301">
    <property type="term" value="P:cell division"/>
    <property type="evidence" value="ECO:0007669"/>
    <property type="project" value="UniProtKB-KW"/>
</dbReference>
<dbReference type="GO" id="GO:1905392">
    <property type="term" value="P:plant organ morphogenesis"/>
    <property type="evidence" value="ECO:0000250"/>
    <property type="project" value="UniProtKB"/>
</dbReference>
<dbReference type="GO" id="GO:0051258">
    <property type="term" value="P:protein polymerization"/>
    <property type="evidence" value="ECO:0000314"/>
    <property type="project" value="UniProtKB"/>
</dbReference>
<dbReference type="GO" id="GO:0051302">
    <property type="term" value="P:regulation of cell division"/>
    <property type="evidence" value="ECO:0000250"/>
    <property type="project" value="UniProtKB"/>
</dbReference>
<dbReference type="GO" id="GO:0090708">
    <property type="term" value="P:specification of plant organ axis polarity"/>
    <property type="evidence" value="ECO:0000250"/>
    <property type="project" value="UniProtKB"/>
</dbReference>
<dbReference type="Gene3D" id="3.30.160.60">
    <property type="entry name" value="Classic Zinc Finger"/>
    <property type="match status" value="1"/>
</dbReference>
<dbReference type="InterPro" id="IPR010369">
    <property type="entry name" value="SOK"/>
</dbReference>
<dbReference type="InterPro" id="IPR048351">
    <property type="entry name" value="SOK_DIX"/>
</dbReference>
<dbReference type="InterPro" id="IPR049899">
    <property type="entry name" value="Znf_C2HC_C3H"/>
</dbReference>
<dbReference type="PANTHER" id="PTHR31083:SF6">
    <property type="entry name" value="PROTEIN SOSEKI 3"/>
    <property type="match status" value="1"/>
</dbReference>
<dbReference type="PANTHER" id="PTHR31083">
    <property type="entry name" value="UPSTREAM OF FLC PROTEIN (DUF966)"/>
    <property type="match status" value="1"/>
</dbReference>
<dbReference type="Pfam" id="PF06136">
    <property type="entry name" value="SOK"/>
    <property type="match status" value="1"/>
</dbReference>
<dbReference type="Pfam" id="PF13913">
    <property type="entry name" value="zf-C2HC_2"/>
    <property type="match status" value="1"/>
</dbReference>
<dbReference type="PROSITE" id="PS52027">
    <property type="entry name" value="ZF_C2HC_C3H"/>
    <property type="match status" value="1"/>
</dbReference>
<comment type="function">
    <text evidence="1">SOSEKI proteins locally interpret global polarity cues and can influence cell division orientation to coordinate cell polarization relative to body axes.</text>
</comment>
<comment type="cofactor">
    <cofactor evidence="2">
        <name>Zn(2+)</name>
        <dbReference type="ChEBI" id="CHEBI:29105"/>
    </cofactor>
</comment>
<comment type="subunit">
    <text evidence="1 4">Homodimer (By similarity). Forms long polymer filaments with other SOKs proteins polymers crucial for polar localization and biological activity (PubMed:32004461).</text>
</comment>
<comment type="subcellular location">
    <subcellularLocation>
        <location evidence="1">Cell membrane</location>
        <topology evidence="1">Peripheral membrane protein</topology>
        <orientation evidence="1">Cytoplasmic side</orientation>
    </subcellularLocation>
</comment>
<comment type="domain">
    <text evidence="1">The DIX-like oligomerization domain is required for polymerization, edge localization and biological activity.</text>
</comment>
<comment type="miscellaneous">
    <text evidence="6">'Soseki' means cornerstone in Japanese.</text>
</comment>
<comment type="similarity">
    <text evidence="6">Belongs to the SOSEKI family.</text>
</comment>
<organism>
    <name type="scientific">Physcomitrium patens</name>
    <name type="common">Spreading-leaved earth moss</name>
    <name type="synonym">Physcomitrella patens</name>
    <dbReference type="NCBI Taxonomy" id="3218"/>
    <lineage>
        <taxon>Eukaryota</taxon>
        <taxon>Viridiplantae</taxon>
        <taxon>Streptophyta</taxon>
        <taxon>Embryophyta</taxon>
        <taxon>Bryophyta</taxon>
        <taxon>Bryophytina</taxon>
        <taxon>Bryopsida</taxon>
        <taxon>Funariidae</taxon>
        <taxon>Funariales</taxon>
        <taxon>Funariaceae</taxon>
        <taxon>Physcomitrium</taxon>
    </lineage>
</organism>
<sequence length="701" mass="77662">MAFEENFLSAQVLYQLSWNGKLEHPHIIDVEYASDQGGLRLRDVKERLTRLRGHGINDSFSWSYKRTYSKTFIWNDLSDDDVIHPLCGSGEYVLRASELIDTNERKSCDVHSRHSNKSMQSSPTMLLDNVTSKQDTIIGDVHFGALESGENRRIGDKLNCLVRNSGANLEEVKSLRGVSAVISQSLPTLYADQEIMDVEKSDFCLSSSDTEISPRPKMTVDSIKPVKDVNLVVMTKSSTVHGVHTPPSPSLKSSTELPFSPGGTKRLWEKEIRKSLFRTRNSSNVNSVSTEDFTAVHMELPPNTHSTHEDNSFWRDSRSKSPSPSSLNELKEVQIDKEEVEQSTSQLIRLLWARWTGGSSKGKRIPYNTCEGASTKIPESKHNSPYRTKSPYKEIRSTHVEGSHQETRQSLAVQSKARVSLEIKEILPPEECMHYPSPMTVQNVTEVASPHAQTDGGGDVCTIKTIVSEQASQPYPEPRDLRTDQGILSEKTPGLHIAVLEGLTSDAPSGPAEAEVDTPLPAVARAKTGNTLSKLKTIASSKPLPPGFHKGTNDTKPVQITPRRTPRNSIPLASPPLVRSFSRDAVRGFSSLAAISLCPDKDSVACTPSPEKTIVKKRINYSAREEMPLVPGLTTLDWEKALQEATTDCLPPPNFSDILQECSICRRTFKPDSLQVHMRGCHPPQYARAFSARASPHVVRC</sequence>
<proteinExistence type="evidence at protein level"/>
<evidence type="ECO:0000250" key="1">
    <source>
        <dbReference type="UniProtKB" id="Q9SYJ8"/>
    </source>
</evidence>
<evidence type="ECO:0000255" key="2">
    <source>
        <dbReference type="PROSITE-ProRule" id="PRU01371"/>
    </source>
</evidence>
<evidence type="ECO:0000256" key="3">
    <source>
        <dbReference type="SAM" id="MobiDB-lite"/>
    </source>
</evidence>
<evidence type="ECO:0000269" key="4">
    <source>
    </source>
</evidence>
<evidence type="ECO:0000303" key="5">
    <source>
    </source>
</evidence>
<evidence type="ECO:0000305" key="6"/>
<evidence type="ECO:0000312" key="7">
    <source>
        <dbReference type="EMBL" id="PNR41520.1"/>
    </source>
</evidence>
<accession>A0A2K1JJ00</accession>
<keyword id="KW-0131">Cell cycle</keyword>
<keyword id="KW-0132">Cell division</keyword>
<keyword id="KW-1003">Cell membrane</keyword>
<keyword id="KW-0217">Developmental protein</keyword>
<keyword id="KW-0472">Membrane</keyword>
<keyword id="KW-0479">Metal-binding</keyword>
<keyword id="KW-1185">Reference proteome</keyword>
<keyword id="KW-0862">Zinc</keyword>
<keyword id="KW-0863">Zinc-finger</keyword>
<feature type="chain" id="PRO_0000452145" description="Protein SOSEKI 1">
    <location>
        <begin position="1"/>
        <end position="701"/>
    </location>
</feature>
<feature type="zinc finger region" description="C2HC/C3H-type" evidence="2">
    <location>
        <begin position="658"/>
        <end position="687"/>
    </location>
</feature>
<feature type="region of interest" description="DIX-like oligomerization domain" evidence="1">
    <location>
        <begin position="8"/>
        <end position="101"/>
    </location>
</feature>
<feature type="region of interest" description="Disordered" evidence="3">
    <location>
        <begin position="238"/>
        <end position="262"/>
    </location>
</feature>
<feature type="region of interest" description="Disordered" evidence="3">
    <location>
        <begin position="300"/>
        <end position="329"/>
    </location>
</feature>
<feature type="region of interest" description="Disordered" evidence="3">
    <location>
        <begin position="366"/>
        <end position="389"/>
    </location>
</feature>
<feature type="region of interest" description="Disordered" evidence="3">
    <location>
        <begin position="538"/>
        <end position="575"/>
    </location>
</feature>
<feature type="compositionally biased region" description="Basic and acidic residues" evidence="3">
    <location>
        <begin position="306"/>
        <end position="319"/>
    </location>
</feature>
<feature type="binding site" evidence="2">
    <location>
        <position position="662"/>
    </location>
    <ligand>
        <name>Zn(2+)</name>
        <dbReference type="ChEBI" id="CHEBI:29105"/>
    </ligand>
</feature>
<feature type="binding site" evidence="2">
    <location>
        <position position="665"/>
    </location>
    <ligand>
        <name>Zn(2+)</name>
        <dbReference type="ChEBI" id="CHEBI:29105"/>
    </ligand>
</feature>
<feature type="binding site" evidence="2">
    <location>
        <position position="677"/>
    </location>
    <ligand>
        <name>Zn(2+)</name>
        <dbReference type="ChEBI" id="CHEBI:29105"/>
    </ligand>
</feature>
<feature type="binding site" evidence="2">
    <location>
        <position position="681"/>
    </location>
    <ligand>
        <name>Zn(2+)</name>
        <dbReference type="ChEBI" id="CHEBI:29105"/>
    </ligand>
</feature>